<dbReference type="EC" id="1.1.5.3" evidence="1"/>
<dbReference type="EMBL" id="AP009240">
    <property type="protein sequence ID" value="BAG78028.1"/>
    <property type="molecule type" value="Genomic_DNA"/>
</dbReference>
<dbReference type="RefSeq" id="WP_001209921.1">
    <property type="nucleotide sequence ID" value="NC_011415.1"/>
</dbReference>
<dbReference type="GeneID" id="93774932"/>
<dbReference type="KEGG" id="ecy:ECSE_2504"/>
<dbReference type="HOGENOM" id="CLU_047793_0_0_6"/>
<dbReference type="UniPathway" id="UPA00618">
    <property type="reaction ID" value="UER00673"/>
</dbReference>
<dbReference type="Proteomes" id="UP000008199">
    <property type="component" value="Chromosome"/>
</dbReference>
<dbReference type="GO" id="GO:0009331">
    <property type="term" value="C:glycerol-3-phosphate dehydrogenase (FAD) complex"/>
    <property type="evidence" value="ECO:0007669"/>
    <property type="project" value="InterPro"/>
</dbReference>
<dbReference type="GO" id="GO:0004368">
    <property type="term" value="F:glycerol-3-phosphate dehydrogenase (quinone) activity"/>
    <property type="evidence" value="ECO:0007669"/>
    <property type="project" value="UniProtKB-UniRule"/>
</dbReference>
<dbReference type="GO" id="GO:0009061">
    <property type="term" value="P:anaerobic respiration"/>
    <property type="evidence" value="ECO:0007669"/>
    <property type="project" value="TreeGrafter"/>
</dbReference>
<dbReference type="GO" id="GO:0019563">
    <property type="term" value="P:glycerol catabolic process"/>
    <property type="evidence" value="ECO:0007669"/>
    <property type="project" value="UniProtKB-UniRule"/>
</dbReference>
<dbReference type="GO" id="GO:0046168">
    <property type="term" value="P:glycerol-3-phosphate catabolic process"/>
    <property type="evidence" value="ECO:0007669"/>
    <property type="project" value="TreeGrafter"/>
</dbReference>
<dbReference type="Gene3D" id="3.50.50.60">
    <property type="entry name" value="FAD/NAD(P)-binding domain"/>
    <property type="match status" value="1"/>
</dbReference>
<dbReference type="HAMAP" id="MF_00753">
    <property type="entry name" value="Glycerol3P_GlpB"/>
    <property type="match status" value="1"/>
</dbReference>
<dbReference type="InterPro" id="IPR003953">
    <property type="entry name" value="FAD-dep_OxRdtase_2_FAD-bd"/>
</dbReference>
<dbReference type="InterPro" id="IPR050315">
    <property type="entry name" value="FAD-oxidoreductase_2"/>
</dbReference>
<dbReference type="InterPro" id="IPR036188">
    <property type="entry name" value="FAD/NAD-bd_sf"/>
</dbReference>
<dbReference type="InterPro" id="IPR009158">
    <property type="entry name" value="G3P_DH_GlpB_su"/>
</dbReference>
<dbReference type="NCBIfam" id="TIGR03378">
    <property type="entry name" value="glycerol3P_GlpB"/>
    <property type="match status" value="1"/>
</dbReference>
<dbReference type="NCBIfam" id="NF003718">
    <property type="entry name" value="PRK05329.1-1"/>
    <property type="match status" value="1"/>
</dbReference>
<dbReference type="NCBIfam" id="NF003719">
    <property type="entry name" value="PRK05329.1-2"/>
    <property type="match status" value="1"/>
</dbReference>
<dbReference type="NCBIfam" id="NF003720">
    <property type="entry name" value="PRK05329.1-3"/>
    <property type="match status" value="1"/>
</dbReference>
<dbReference type="NCBIfam" id="NF003721">
    <property type="entry name" value="PRK05329.1-4"/>
    <property type="match status" value="1"/>
</dbReference>
<dbReference type="PANTHER" id="PTHR43400:SF11">
    <property type="entry name" value="ANAEROBIC GLYCEROL-3-PHOSPHATE DEHYDROGENASE SUBUNIT B"/>
    <property type="match status" value="1"/>
</dbReference>
<dbReference type="PANTHER" id="PTHR43400">
    <property type="entry name" value="FUMARATE REDUCTASE"/>
    <property type="match status" value="1"/>
</dbReference>
<dbReference type="Pfam" id="PF00890">
    <property type="entry name" value="FAD_binding_2"/>
    <property type="match status" value="1"/>
</dbReference>
<dbReference type="PIRSF" id="PIRSF000141">
    <property type="entry name" value="Anaerobic_G3P_dh"/>
    <property type="match status" value="1"/>
</dbReference>
<dbReference type="SUPFAM" id="SSF51905">
    <property type="entry name" value="FAD/NAD(P)-binding domain"/>
    <property type="match status" value="1"/>
</dbReference>
<name>GLPB_ECOSE</name>
<organism>
    <name type="scientific">Escherichia coli (strain SE11)</name>
    <dbReference type="NCBI Taxonomy" id="409438"/>
    <lineage>
        <taxon>Bacteria</taxon>
        <taxon>Pseudomonadati</taxon>
        <taxon>Pseudomonadota</taxon>
        <taxon>Gammaproteobacteria</taxon>
        <taxon>Enterobacterales</taxon>
        <taxon>Enterobacteriaceae</taxon>
        <taxon>Escherichia</taxon>
    </lineage>
</organism>
<sequence length="419" mass="45415">MRFDTVIMGGGLAGLLCGLQLQKHGLRCAIVTRGQSALHFSSGSLDLLSHLPDGQPVTDIHSGLESLRQQAPAHPYSLLEPQRVLDLACQAQALIAESGAQLQGSVELAHQRVTPLGTLRATWLSSPEVPVWPLPAKKICVVGISGLMDFQAHLAAASLRELDLSVETAEIELPELDVLRNNATEFRAVNIARFLDNEENWPLLLDALIPVANTCEMILMPACFGLADDKLWRWLNEKLPCSLMLLPTLPPSVLGIRLQNQLQRQFVRQGGVWMPGDEVKKVTCKNGVVNEIWTRNHADIPLRPRFAVLASGSFFSGGLVAERNGIREPILGLDVLQTATRGEWYKGDFFAPQPWQQFGVTTDETLRPSQAGQTIENLFAIGSVLGGFDPIAQGCGGGVCAVSALHAAQQIAQRAGGQQ</sequence>
<reference key="1">
    <citation type="journal article" date="2008" name="DNA Res.">
        <title>Complete genome sequence and comparative analysis of the wild-type commensal Escherichia coli strain SE11 isolated from a healthy adult.</title>
        <authorList>
            <person name="Oshima K."/>
            <person name="Toh H."/>
            <person name="Ogura Y."/>
            <person name="Sasamoto H."/>
            <person name="Morita H."/>
            <person name="Park S.-H."/>
            <person name="Ooka T."/>
            <person name="Iyoda S."/>
            <person name="Taylor T.D."/>
            <person name="Hayashi T."/>
            <person name="Itoh K."/>
            <person name="Hattori M."/>
        </authorList>
    </citation>
    <scope>NUCLEOTIDE SEQUENCE [LARGE SCALE GENOMIC DNA]</scope>
    <source>
        <strain>SE11</strain>
    </source>
</reference>
<comment type="function">
    <text evidence="1">Conversion of glycerol 3-phosphate to dihydroxyacetone. Uses fumarate or nitrate as electron acceptor.</text>
</comment>
<comment type="catalytic activity">
    <reaction evidence="1">
        <text>a quinone + sn-glycerol 3-phosphate = dihydroxyacetone phosphate + a quinol</text>
        <dbReference type="Rhea" id="RHEA:18977"/>
        <dbReference type="ChEBI" id="CHEBI:24646"/>
        <dbReference type="ChEBI" id="CHEBI:57597"/>
        <dbReference type="ChEBI" id="CHEBI:57642"/>
        <dbReference type="ChEBI" id="CHEBI:132124"/>
        <dbReference type="EC" id="1.1.5.3"/>
    </reaction>
</comment>
<comment type="cofactor">
    <cofactor evidence="1">
        <name>FMN</name>
        <dbReference type="ChEBI" id="CHEBI:58210"/>
    </cofactor>
</comment>
<comment type="pathway">
    <text evidence="1">Polyol metabolism; glycerol degradation via glycerol kinase pathway; glycerone phosphate from sn-glycerol 3-phosphate (anaerobic route): step 1/1.</text>
</comment>
<comment type="subunit">
    <text evidence="1">Composed of a catalytic GlpA/B dimer and of membrane bound GlpC.</text>
</comment>
<comment type="similarity">
    <text evidence="1">Belongs to the anaerobic G-3-P dehydrogenase subunit B family.</text>
</comment>
<evidence type="ECO:0000255" key="1">
    <source>
        <dbReference type="HAMAP-Rule" id="MF_00753"/>
    </source>
</evidence>
<proteinExistence type="inferred from homology"/>
<accession>B6I7H1</accession>
<keyword id="KW-0285">Flavoprotein</keyword>
<keyword id="KW-0288">FMN</keyword>
<keyword id="KW-0560">Oxidoreductase</keyword>
<protein>
    <recommendedName>
        <fullName evidence="1">Anaerobic glycerol-3-phosphate dehydrogenase subunit B</fullName>
        <shortName evidence="1">Anaerobic G-3-P dehydrogenase subunit B</shortName>
        <shortName evidence="1">Anaerobic G3Pdhase B</shortName>
        <ecNumber evidence="1">1.1.5.3</ecNumber>
    </recommendedName>
</protein>
<feature type="chain" id="PRO_1000133361" description="Anaerobic glycerol-3-phosphate dehydrogenase subunit B">
    <location>
        <begin position="1"/>
        <end position="419"/>
    </location>
</feature>
<gene>
    <name evidence="1" type="primary">glpB</name>
    <name type="ordered locus">ECSE_2504</name>
</gene>